<proteinExistence type="evidence at transcript level"/>
<accession>Q17QU4</accession>
<reference key="1">
    <citation type="submission" date="2006-06" db="EMBL/GenBank/DDBJ databases">
        <authorList>
            <consortium name="NIH - Mammalian Gene Collection (MGC) project"/>
        </authorList>
    </citation>
    <scope>NUCLEOTIDE SEQUENCE [LARGE SCALE MRNA]</scope>
    <source>
        <strain>Hereford</strain>
        <tissue>Thalamus</tissue>
    </source>
</reference>
<sequence length="213" mass="24608">MEAIWLYQFRLIVIGDSTVGKSCLIRRFTEGRFAQVSDPTVGVDFFSRLVEIEPGKRIKLQIWDTAGQERFRSITRAYYRNSVGGLLLFDITNRRSFQNVHEWLEETKVHVQPYQIVFVLVGHKCDLDTQRQVTRHEAEKLAAAYGMKYIETSARDAINVEKAFTDLTRDIYELVKRGDITIQEGWEGVKSGFVPNVVHSSEEVVKSERRCLC</sequence>
<protein>
    <recommendedName>
        <fullName>Ras-related protein Rab-39B</fullName>
        <ecNumber evidence="2">3.6.5.2</ecNumber>
    </recommendedName>
</protein>
<evidence type="ECO:0000250" key="1">
    <source>
        <dbReference type="UniProtKB" id="P20336"/>
    </source>
</evidence>
<evidence type="ECO:0000250" key="2">
    <source>
        <dbReference type="UniProtKB" id="P62820"/>
    </source>
</evidence>
<evidence type="ECO:0000250" key="3">
    <source>
        <dbReference type="UniProtKB" id="Q8BHC1"/>
    </source>
</evidence>
<evidence type="ECO:0000250" key="4">
    <source>
        <dbReference type="UniProtKB" id="Q96DA2"/>
    </source>
</evidence>
<evidence type="ECO:0000255" key="5">
    <source>
        <dbReference type="PROSITE-ProRule" id="PRU00753"/>
    </source>
</evidence>
<evidence type="ECO:0000305" key="6"/>
<organism>
    <name type="scientific">Bos taurus</name>
    <name type="common">Bovine</name>
    <dbReference type="NCBI Taxonomy" id="9913"/>
    <lineage>
        <taxon>Eukaryota</taxon>
        <taxon>Metazoa</taxon>
        <taxon>Chordata</taxon>
        <taxon>Craniata</taxon>
        <taxon>Vertebrata</taxon>
        <taxon>Euteleostomi</taxon>
        <taxon>Mammalia</taxon>
        <taxon>Eutheria</taxon>
        <taxon>Laurasiatheria</taxon>
        <taxon>Artiodactyla</taxon>
        <taxon>Ruminantia</taxon>
        <taxon>Pecora</taxon>
        <taxon>Bovidae</taxon>
        <taxon>Bovinae</taxon>
        <taxon>Bos</taxon>
    </lineage>
</organism>
<comment type="function">
    <text evidence="3 4">The small GTPases Rab are key regulators of intracellular membrane trafficking, from the formation of transport vesicles to their fusion with membranes. Rabs cycle between an inactive GDP-bound form and an active GTP-bound form that is able to recruit to membranes different sets of downstream effectors directly responsible for vesicle formation, movement, tethering and fusion. RAB39B is involved in autophagy and may function in autophagosome formation (By similarity). Binds downstream effector PICK1 to ensure selectively GRIA2 exit from the endoplasmic reticulum to the Golgi and to regulate AMPAR composition at the post-synapses and thus synaptic transmission. May regulate the homeostasis of SNCA/alpha-synuclein (By similarity).</text>
</comment>
<comment type="catalytic activity">
    <reaction evidence="2">
        <text>GTP + H2O = GDP + phosphate + H(+)</text>
        <dbReference type="Rhea" id="RHEA:19669"/>
        <dbReference type="ChEBI" id="CHEBI:15377"/>
        <dbReference type="ChEBI" id="CHEBI:15378"/>
        <dbReference type="ChEBI" id="CHEBI:37565"/>
        <dbReference type="ChEBI" id="CHEBI:43474"/>
        <dbReference type="ChEBI" id="CHEBI:58189"/>
        <dbReference type="EC" id="3.6.5.2"/>
    </reaction>
    <physiologicalReaction direction="left-to-right" evidence="2">
        <dbReference type="Rhea" id="RHEA:19670"/>
    </physiologicalReaction>
</comment>
<comment type="cofactor">
    <cofactor evidence="4">
        <name>Mg(2+)</name>
        <dbReference type="ChEBI" id="CHEBI:18420"/>
    </cofactor>
</comment>
<comment type="activity regulation">
    <text evidence="4 6">Regulated by guanine nucleotide exchange factors (GEFs) including C9orf72-SMCR8 complex, which promote the exchange of bound GDP for free GTP (By similarity). Regulated by GTPase activating proteins (GAPs) which increase the GTP hydrolysis activity (Probable). Inhibited by GDP dissociation inhibitors (GDIs) (Probable).</text>
</comment>
<comment type="subunit">
    <text evidence="3 4">Interacts (GDP-bound) with C9orf72; C9orf72 in complex with SMCR8 acts as a GEF for RAB39B (By similarity). Interacts (in GTP-bound form) with PICK1 (via PDZ domain); a PICK1 homodimer may allow simultaneous association of RAB39B and GRIA2 to PICK1 which is involved in GRIA2 trafficking (By similarity). Interacts with isoform c of RASSF1; the interaction is strong (By similarity). Interacts with isoform a of RASSF1; the interaction is weak (By similarity). Interacts with the DLG4/PSD-95 (By similarity). Interacts (GTP-bound) with HOPS complex components VPS39 and VPS41 (By similarity).</text>
</comment>
<comment type="subcellular location">
    <subcellularLocation>
        <location evidence="4">Cell membrane</location>
        <topology evidence="4">Lipid-anchor</topology>
        <orientation evidence="4">Cytoplasmic side</orientation>
    </subcellularLocation>
    <subcellularLocation>
        <location evidence="4">Cytoplasmic vesicle membrane</location>
        <topology evidence="4">Lipid-anchor</topology>
        <orientation evidence="4">Cytoplasmic side</orientation>
    </subcellularLocation>
    <subcellularLocation>
        <location evidence="4">Golgi apparatus</location>
    </subcellularLocation>
    <subcellularLocation>
        <location evidence="4">Cytoplasmic vesicle</location>
        <location evidence="4">Autophagosome membrane</location>
    </subcellularLocation>
    <subcellularLocation>
        <location evidence="4">Autolysosome membrane</location>
    </subcellularLocation>
    <text evidence="3 4">Partial colocalization with markers that cycle from the cell surface to the trans-Golgi network. Colocalized with STX17 in autolysosomes in autophagy-induced conditions, although less compared with RAB39A (By similarity).</text>
</comment>
<comment type="domain">
    <text evidence="4">Switch I, switch II and the interswitch regions are characteristic of Rab GTPases and mediate the interactions with Rab downstream effectors. The switch regions undergo conformational changes upon nucleotide binding which drive interaction with specific sets of effector proteins, with most effectors only binding to GTP-bound Rab.</text>
</comment>
<comment type="similarity">
    <text evidence="6">Belongs to the small GTPase superfamily. Rab family.</text>
</comment>
<name>RB39B_BOVIN</name>
<dbReference type="EC" id="3.6.5.2" evidence="2"/>
<dbReference type="EMBL" id="BC118177">
    <property type="protein sequence ID" value="AAI18178.1"/>
    <property type="molecule type" value="mRNA"/>
</dbReference>
<dbReference type="RefSeq" id="NP_001069563.1">
    <property type="nucleotide sequence ID" value="NM_001076095.1"/>
</dbReference>
<dbReference type="SMR" id="Q17QU4"/>
<dbReference type="FunCoup" id="Q17QU4">
    <property type="interactions" value="1845"/>
</dbReference>
<dbReference type="STRING" id="9913.ENSBTAP00000026354"/>
<dbReference type="PaxDb" id="9913-ENSBTAP00000026354"/>
<dbReference type="Ensembl" id="ENSBTAT00000026354.3">
    <property type="protein sequence ID" value="ENSBTAP00000026354.2"/>
    <property type="gene ID" value="ENSBTAG00000019779.3"/>
</dbReference>
<dbReference type="GeneID" id="537560"/>
<dbReference type="KEGG" id="bta:537560"/>
<dbReference type="CTD" id="116442"/>
<dbReference type="VEuPathDB" id="HostDB:ENSBTAG00000019779"/>
<dbReference type="VGNC" id="VGNC:33648">
    <property type="gene designation" value="RAB39B"/>
</dbReference>
<dbReference type="eggNOG" id="KOG0091">
    <property type="taxonomic scope" value="Eukaryota"/>
</dbReference>
<dbReference type="GeneTree" id="ENSGT00940000158132"/>
<dbReference type="HOGENOM" id="CLU_041217_23_1_1"/>
<dbReference type="InParanoid" id="Q17QU4"/>
<dbReference type="OMA" id="XSITRAY"/>
<dbReference type="OrthoDB" id="9989112at2759"/>
<dbReference type="TreeFam" id="TF300032"/>
<dbReference type="Reactome" id="R-BTA-8873719">
    <property type="pathway name" value="RAB geranylgeranylation"/>
</dbReference>
<dbReference type="Reactome" id="R-BTA-8876198">
    <property type="pathway name" value="RAB GEFs exchange GTP for GDP on RABs"/>
</dbReference>
<dbReference type="Proteomes" id="UP000009136">
    <property type="component" value="Chromosome X"/>
</dbReference>
<dbReference type="Bgee" id="ENSBTAG00000019779">
    <property type="expression patterns" value="Expressed in occipital lobe and 61 other cell types or tissues"/>
</dbReference>
<dbReference type="GO" id="GO:0030659">
    <property type="term" value="C:cytoplasmic vesicle membrane"/>
    <property type="evidence" value="ECO:0007669"/>
    <property type="project" value="UniProtKB-SubCell"/>
</dbReference>
<dbReference type="GO" id="GO:0005794">
    <property type="term" value="C:Golgi apparatus"/>
    <property type="evidence" value="ECO:0000250"/>
    <property type="project" value="UniProtKB"/>
</dbReference>
<dbReference type="GO" id="GO:0043005">
    <property type="term" value="C:neuron projection"/>
    <property type="evidence" value="ECO:0007669"/>
    <property type="project" value="Ensembl"/>
</dbReference>
<dbReference type="GO" id="GO:0005886">
    <property type="term" value="C:plasma membrane"/>
    <property type="evidence" value="ECO:0007669"/>
    <property type="project" value="UniProtKB-SubCell"/>
</dbReference>
<dbReference type="GO" id="GO:0003925">
    <property type="term" value="F:G protein activity"/>
    <property type="evidence" value="ECO:0000250"/>
    <property type="project" value="UniProtKB"/>
</dbReference>
<dbReference type="GO" id="GO:0005525">
    <property type="term" value="F:GTP binding"/>
    <property type="evidence" value="ECO:0000318"/>
    <property type="project" value="GO_Central"/>
</dbReference>
<dbReference type="GO" id="GO:0003924">
    <property type="term" value="F:GTPase activity"/>
    <property type="evidence" value="ECO:0000318"/>
    <property type="project" value="GO_Central"/>
</dbReference>
<dbReference type="GO" id="GO:0031489">
    <property type="term" value="F:myosin V binding"/>
    <property type="evidence" value="ECO:0000318"/>
    <property type="project" value="GO_Central"/>
</dbReference>
<dbReference type="GO" id="GO:0006914">
    <property type="term" value="P:autophagy"/>
    <property type="evidence" value="ECO:0007669"/>
    <property type="project" value="UniProtKB-KW"/>
</dbReference>
<dbReference type="GO" id="GO:0015031">
    <property type="term" value="P:protein transport"/>
    <property type="evidence" value="ECO:0007669"/>
    <property type="project" value="UniProtKB-KW"/>
</dbReference>
<dbReference type="GO" id="GO:0032482">
    <property type="term" value="P:Rab protein signal transduction"/>
    <property type="evidence" value="ECO:0007669"/>
    <property type="project" value="InterPro"/>
</dbReference>
<dbReference type="GO" id="GO:0010506">
    <property type="term" value="P:regulation of autophagy"/>
    <property type="evidence" value="ECO:0000250"/>
    <property type="project" value="UniProtKB"/>
</dbReference>
<dbReference type="GO" id="GO:0050808">
    <property type="term" value="P:synapse organization"/>
    <property type="evidence" value="ECO:0000250"/>
    <property type="project" value="UniProtKB"/>
</dbReference>
<dbReference type="GO" id="GO:0016192">
    <property type="term" value="P:vesicle-mediated transport"/>
    <property type="evidence" value="ECO:0000250"/>
    <property type="project" value="UniProtKB"/>
</dbReference>
<dbReference type="CDD" id="cd04111">
    <property type="entry name" value="Rab39"/>
    <property type="match status" value="1"/>
</dbReference>
<dbReference type="FunFam" id="3.40.50.300:FF:000358">
    <property type="entry name" value="RAB39B, member RAS oncogene family"/>
    <property type="match status" value="1"/>
</dbReference>
<dbReference type="Gene3D" id="3.40.50.300">
    <property type="entry name" value="P-loop containing nucleotide triphosphate hydrolases"/>
    <property type="match status" value="1"/>
</dbReference>
<dbReference type="InterPro" id="IPR027417">
    <property type="entry name" value="P-loop_NTPase"/>
</dbReference>
<dbReference type="InterPro" id="IPR041818">
    <property type="entry name" value="Rab39"/>
</dbReference>
<dbReference type="InterPro" id="IPR050209">
    <property type="entry name" value="Rab_GTPases_membrane_traffic"/>
</dbReference>
<dbReference type="InterPro" id="IPR005225">
    <property type="entry name" value="Small_GTP-bd"/>
</dbReference>
<dbReference type="InterPro" id="IPR001806">
    <property type="entry name" value="Small_GTPase"/>
</dbReference>
<dbReference type="NCBIfam" id="TIGR00231">
    <property type="entry name" value="small_GTP"/>
    <property type="match status" value="1"/>
</dbReference>
<dbReference type="PANTHER" id="PTHR47979">
    <property type="entry name" value="DRAB11-RELATED"/>
    <property type="match status" value="1"/>
</dbReference>
<dbReference type="Pfam" id="PF00071">
    <property type="entry name" value="Ras"/>
    <property type="match status" value="1"/>
</dbReference>
<dbReference type="PRINTS" id="PR00449">
    <property type="entry name" value="RASTRNSFRMNG"/>
</dbReference>
<dbReference type="SMART" id="SM00175">
    <property type="entry name" value="RAB"/>
    <property type="match status" value="1"/>
</dbReference>
<dbReference type="SMART" id="SM00176">
    <property type="entry name" value="RAN"/>
    <property type="match status" value="1"/>
</dbReference>
<dbReference type="SMART" id="SM00173">
    <property type="entry name" value="RAS"/>
    <property type="match status" value="1"/>
</dbReference>
<dbReference type="SMART" id="SM00174">
    <property type="entry name" value="RHO"/>
    <property type="match status" value="1"/>
</dbReference>
<dbReference type="SUPFAM" id="SSF52540">
    <property type="entry name" value="P-loop containing nucleoside triphosphate hydrolases"/>
    <property type="match status" value="1"/>
</dbReference>
<dbReference type="PROSITE" id="PS51419">
    <property type="entry name" value="RAB"/>
    <property type="match status" value="1"/>
</dbReference>
<keyword id="KW-0072">Autophagy</keyword>
<keyword id="KW-1003">Cell membrane</keyword>
<keyword id="KW-0968">Cytoplasmic vesicle</keyword>
<keyword id="KW-0333">Golgi apparatus</keyword>
<keyword id="KW-0342">GTP-binding</keyword>
<keyword id="KW-0378">Hydrolase</keyword>
<keyword id="KW-0449">Lipoprotein</keyword>
<keyword id="KW-0458">Lysosome</keyword>
<keyword id="KW-0460">Magnesium</keyword>
<keyword id="KW-0472">Membrane</keyword>
<keyword id="KW-0479">Metal-binding</keyword>
<keyword id="KW-0488">Methylation</keyword>
<keyword id="KW-0547">Nucleotide-binding</keyword>
<keyword id="KW-0597">Phosphoprotein</keyword>
<keyword id="KW-0636">Prenylation</keyword>
<keyword id="KW-0653">Protein transport</keyword>
<keyword id="KW-1185">Reference proteome</keyword>
<keyword id="KW-0813">Transport</keyword>
<gene>
    <name type="primary">RAB39B</name>
</gene>
<feature type="chain" id="PRO_0000262917" description="Ras-related protein Rab-39B">
    <location>
        <begin position="1"/>
        <end position="213"/>
    </location>
</feature>
<feature type="region of interest" description="Switch-I" evidence="5">
    <location>
        <begin position="35"/>
        <end position="43"/>
    </location>
</feature>
<feature type="region of interest" description="Switch-II" evidence="5">
    <location>
        <begin position="67"/>
        <end position="83"/>
    </location>
</feature>
<feature type="binding site" evidence="4">
    <location>
        <position position="17"/>
    </location>
    <ligand>
        <name>GTP</name>
        <dbReference type="ChEBI" id="CHEBI:37565"/>
    </ligand>
</feature>
<feature type="binding site" evidence="4">
    <location>
        <position position="20"/>
    </location>
    <ligand>
        <name>GTP</name>
        <dbReference type="ChEBI" id="CHEBI:37565"/>
    </ligand>
</feature>
<feature type="binding site" evidence="4">
    <location>
        <position position="21"/>
    </location>
    <ligand>
        <name>GTP</name>
        <dbReference type="ChEBI" id="CHEBI:37565"/>
    </ligand>
</feature>
<feature type="binding site" evidence="4">
    <location>
        <position position="22"/>
    </location>
    <ligand>
        <name>GTP</name>
        <dbReference type="ChEBI" id="CHEBI:37565"/>
    </ligand>
</feature>
<feature type="binding site" evidence="4">
    <location>
        <position position="22"/>
    </location>
    <ligand>
        <name>Mg(2+)</name>
        <dbReference type="ChEBI" id="CHEBI:18420"/>
    </ligand>
</feature>
<feature type="binding site" evidence="4">
    <location>
        <position position="23"/>
    </location>
    <ligand>
        <name>GTP</name>
        <dbReference type="ChEBI" id="CHEBI:37565"/>
    </ligand>
</feature>
<feature type="binding site" evidence="4">
    <location>
        <position position="37"/>
    </location>
    <ligand>
        <name>GTP</name>
        <dbReference type="ChEBI" id="CHEBI:37565"/>
    </ligand>
</feature>
<feature type="binding site" evidence="4">
    <location>
        <position position="40"/>
    </location>
    <ligand>
        <name>GTP</name>
        <dbReference type="ChEBI" id="CHEBI:37565"/>
    </ligand>
</feature>
<feature type="binding site" evidence="4">
    <location>
        <position position="40"/>
    </location>
    <ligand>
        <name>Mg(2+)</name>
        <dbReference type="ChEBI" id="CHEBI:18420"/>
    </ligand>
</feature>
<feature type="binding site" evidence="2 4">
    <location>
        <position position="64"/>
    </location>
    <ligand>
        <name>Mg(2+)</name>
        <dbReference type="ChEBI" id="CHEBI:18420"/>
    </ligand>
</feature>
<feature type="binding site" evidence="4">
    <location>
        <position position="67"/>
    </location>
    <ligand>
        <name>GTP</name>
        <dbReference type="ChEBI" id="CHEBI:37565"/>
    </ligand>
</feature>
<feature type="binding site" evidence="4">
    <location>
        <position position="123"/>
    </location>
    <ligand>
        <name>GTP</name>
        <dbReference type="ChEBI" id="CHEBI:37565"/>
    </ligand>
</feature>
<feature type="binding site" evidence="4">
    <location>
        <position position="124"/>
    </location>
    <ligand>
        <name>GTP</name>
        <dbReference type="ChEBI" id="CHEBI:37565"/>
    </ligand>
</feature>
<feature type="binding site" evidence="4">
    <location>
        <position position="126"/>
    </location>
    <ligand>
        <name>GTP</name>
        <dbReference type="ChEBI" id="CHEBI:37565"/>
    </ligand>
</feature>
<feature type="binding site" evidence="4">
    <location>
        <position position="154"/>
    </location>
    <ligand>
        <name>GTP</name>
        <dbReference type="ChEBI" id="CHEBI:37565"/>
    </ligand>
</feature>
<feature type="binding site" evidence="4">
    <location>
        <position position="155"/>
    </location>
    <ligand>
        <name>GTP</name>
        <dbReference type="ChEBI" id="CHEBI:37565"/>
    </ligand>
</feature>
<feature type="modified residue" description="Phosphoserine" evidence="3">
    <location>
        <position position="201"/>
    </location>
</feature>
<feature type="modified residue" description="Cysteine methyl ester" evidence="1">
    <location>
        <position position="213"/>
    </location>
</feature>
<feature type="lipid moiety-binding region" description="S-geranylgeranyl cysteine" evidence="1">
    <location>
        <position position="211"/>
    </location>
</feature>
<feature type="lipid moiety-binding region" description="S-geranylgeranyl cysteine" evidence="1">
    <location>
        <position position="213"/>
    </location>
</feature>